<reference key="1">
    <citation type="submission" date="2003-03" db="EMBL/GenBank/DDBJ databases">
        <title>The complete genome sequence of Neisseria gonorrhoeae.</title>
        <authorList>
            <person name="Lewis L.A."/>
            <person name="Gillaspy A.F."/>
            <person name="McLaughlin R.E."/>
            <person name="Gipson M."/>
            <person name="Ducey T.F."/>
            <person name="Ownbey T."/>
            <person name="Hartman K."/>
            <person name="Nydick C."/>
            <person name="Carson M.B."/>
            <person name="Vaughn J."/>
            <person name="Thomson C."/>
            <person name="Song L."/>
            <person name="Lin S."/>
            <person name="Yuan X."/>
            <person name="Najar F."/>
            <person name="Zhan M."/>
            <person name="Ren Q."/>
            <person name="Zhu H."/>
            <person name="Qi S."/>
            <person name="Kenton S.M."/>
            <person name="Lai H."/>
            <person name="White J.D."/>
            <person name="Clifton S."/>
            <person name="Roe B.A."/>
            <person name="Dyer D.W."/>
        </authorList>
    </citation>
    <scope>NUCLEOTIDE SEQUENCE [LARGE SCALE GENOMIC DNA]</scope>
    <source>
        <strain>ATCC 700825 / FA 1090</strain>
    </source>
</reference>
<protein>
    <recommendedName>
        <fullName evidence="1">Nucleoid-associated protein NGO_0742</fullName>
    </recommendedName>
</protein>
<dbReference type="EMBL" id="AE004969">
    <property type="protein sequence ID" value="AAW89459.1"/>
    <property type="molecule type" value="Genomic_DNA"/>
</dbReference>
<dbReference type="RefSeq" id="WP_003688693.1">
    <property type="nucleotide sequence ID" value="NC_002946.2"/>
</dbReference>
<dbReference type="RefSeq" id="YP_207871.1">
    <property type="nucleotide sequence ID" value="NC_002946.2"/>
</dbReference>
<dbReference type="SMR" id="Q5F8M8"/>
<dbReference type="STRING" id="242231.NGO_0742"/>
<dbReference type="KEGG" id="ngo:NGO_0742"/>
<dbReference type="PATRIC" id="fig|242231.10.peg.884"/>
<dbReference type="HOGENOM" id="CLU_140930_0_0_4"/>
<dbReference type="Proteomes" id="UP000000535">
    <property type="component" value="Chromosome"/>
</dbReference>
<dbReference type="GO" id="GO:0043590">
    <property type="term" value="C:bacterial nucleoid"/>
    <property type="evidence" value="ECO:0007669"/>
    <property type="project" value="UniProtKB-UniRule"/>
</dbReference>
<dbReference type="GO" id="GO:0005829">
    <property type="term" value="C:cytosol"/>
    <property type="evidence" value="ECO:0007669"/>
    <property type="project" value="TreeGrafter"/>
</dbReference>
<dbReference type="GO" id="GO:0003677">
    <property type="term" value="F:DNA binding"/>
    <property type="evidence" value="ECO:0007669"/>
    <property type="project" value="UniProtKB-UniRule"/>
</dbReference>
<dbReference type="FunFam" id="3.30.1310.10:FF:000007">
    <property type="entry name" value="Nucleoid-associated protein NMC1380"/>
    <property type="match status" value="1"/>
</dbReference>
<dbReference type="Gene3D" id="3.30.1310.10">
    <property type="entry name" value="Nucleoid-associated protein YbaB-like domain"/>
    <property type="match status" value="1"/>
</dbReference>
<dbReference type="HAMAP" id="MF_00274">
    <property type="entry name" value="DNA_YbaB_EbfC"/>
    <property type="match status" value="1"/>
</dbReference>
<dbReference type="InterPro" id="IPR036894">
    <property type="entry name" value="YbaB-like_sf"/>
</dbReference>
<dbReference type="InterPro" id="IPR004401">
    <property type="entry name" value="YbaB/EbfC"/>
</dbReference>
<dbReference type="NCBIfam" id="TIGR00103">
    <property type="entry name" value="DNA_YbaB_EbfC"/>
    <property type="match status" value="1"/>
</dbReference>
<dbReference type="PANTHER" id="PTHR33449">
    <property type="entry name" value="NUCLEOID-ASSOCIATED PROTEIN YBAB"/>
    <property type="match status" value="1"/>
</dbReference>
<dbReference type="PANTHER" id="PTHR33449:SF1">
    <property type="entry name" value="NUCLEOID-ASSOCIATED PROTEIN YBAB"/>
    <property type="match status" value="1"/>
</dbReference>
<dbReference type="Pfam" id="PF02575">
    <property type="entry name" value="YbaB_DNA_bd"/>
    <property type="match status" value="1"/>
</dbReference>
<dbReference type="PIRSF" id="PIRSF004555">
    <property type="entry name" value="UCP004555"/>
    <property type="match status" value="1"/>
</dbReference>
<dbReference type="SUPFAM" id="SSF82607">
    <property type="entry name" value="YbaB-like"/>
    <property type="match status" value="1"/>
</dbReference>
<accession>Q5F8M8</accession>
<gene>
    <name type="ordered locus">NGO_0742</name>
</gene>
<name>Y742_NEIG1</name>
<feature type="chain" id="PRO_1000003782" description="Nucleoid-associated protein NGO_0742">
    <location>
        <begin position="1"/>
        <end position="111"/>
    </location>
</feature>
<proteinExistence type="inferred from homology"/>
<organism>
    <name type="scientific">Neisseria gonorrhoeae (strain ATCC 700825 / FA 1090)</name>
    <dbReference type="NCBI Taxonomy" id="242231"/>
    <lineage>
        <taxon>Bacteria</taxon>
        <taxon>Pseudomonadati</taxon>
        <taxon>Pseudomonadota</taxon>
        <taxon>Betaproteobacteria</taxon>
        <taxon>Neisseriales</taxon>
        <taxon>Neisseriaceae</taxon>
        <taxon>Neisseria</taxon>
    </lineage>
</organism>
<comment type="function">
    <text evidence="1">Binds to DNA and alters its conformation. May be involved in regulation of gene expression, nucleoid organization and DNA protection.</text>
</comment>
<comment type="subunit">
    <text evidence="1">Homodimer.</text>
</comment>
<comment type="subcellular location">
    <subcellularLocation>
        <location evidence="1">Cytoplasm</location>
        <location evidence="1">Nucleoid</location>
    </subcellularLocation>
</comment>
<comment type="similarity">
    <text evidence="1">Belongs to the YbaB/EbfC family.</text>
</comment>
<keyword id="KW-0963">Cytoplasm</keyword>
<keyword id="KW-0238">DNA-binding</keyword>
<keyword id="KW-1185">Reference proteome</keyword>
<evidence type="ECO:0000255" key="1">
    <source>
        <dbReference type="HAMAP-Rule" id="MF_00274"/>
    </source>
</evidence>
<sequence>MFGKAGLGGLMKQAQQMQENMKKAQAKLAETEIEGEAGNGLVKITMTCAHEVRKIDISPDLIQEAADDKEMLEDLILAALKSARGKAEETANKTMGAFTQDLPPGVGDFFR</sequence>